<evidence type="ECO:0000255" key="1">
    <source>
        <dbReference type="HAMAP-Rule" id="MF_00004"/>
    </source>
</evidence>
<sequence>MIDHSSARDAVTRLTRWADDFPQPGVRFADLTPVFSDADGFRVVVDALAACAPEADVIAAVDARGFLLGGGVARELGSGVVAVRKSGKLPPPVLSQSYTLEYGTATLEIPAGSIGLDGRSVLVVDDVLATGGTLDATARLVESAGARVIGVAVVLEIAALGGRERLGKYPLTSLVTV</sequence>
<accession>Q0S1C1</accession>
<proteinExistence type="inferred from homology"/>
<gene>
    <name evidence="1" type="primary">apt</name>
    <name type="ordered locus">RHA1_ro06899</name>
</gene>
<reference key="1">
    <citation type="journal article" date="2006" name="Proc. Natl. Acad. Sci. U.S.A.">
        <title>The complete genome of Rhodococcus sp. RHA1 provides insights into a catabolic powerhouse.</title>
        <authorList>
            <person name="McLeod M.P."/>
            <person name="Warren R.L."/>
            <person name="Hsiao W.W.L."/>
            <person name="Araki N."/>
            <person name="Myhre M."/>
            <person name="Fernandes C."/>
            <person name="Miyazawa D."/>
            <person name="Wong W."/>
            <person name="Lillquist A.L."/>
            <person name="Wang D."/>
            <person name="Dosanjh M."/>
            <person name="Hara H."/>
            <person name="Petrescu A."/>
            <person name="Morin R.D."/>
            <person name="Yang G."/>
            <person name="Stott J.M."/>
            <person name="Schein J.E."/>
            <person name="Shin H."/>
            <person name="Smailus D."/>
            <person name="Siddiqui A.S."/>
            <person name="Marra M.A."/>
            <person name="Jones S.J.M."/>
            <person name="Holt R."/>
            <person name="Brinkman F.S.L."/>
            <person name="Miyauchi K."/>
            <person name="Fukuda M."/>
            <person name="Davies J.E."/>
            <person name="Mohn W.W."/>
            <person name="Eltis L.D."/>
        </authorList>
    </citation>
    <scope>NUCLEOTIDE SEQUENCE [LARGE SCALE GENOMIC DNA]</scope>
    <source>
        <strain>RHA1</strain>
    </source>
</reference>
<organism>
    <name type="scientific">Rhodococcus jostii (strain RHA1)</name>
    <dbReference type="NCBI Taxonomy" id="101510"/>
    <lineage>
        <taxon>Bacteria</taxon>
        <taxon>Bacillati</taxon>
        <taxon>Actinomycetota</taxon>
        <taxon>Actinomycetes</taxon>
        <taxon>Mycobacteriales</taxon>
        <taxon>Nocardiaceae</taxon>
        <taxon>Rhodococcus</taxon>
    </lineage>
</organism>
<keyword id="KW-0963">Cytoplasm</keyword>
<keyword id="KW-0328">Glycosyltransferase</keyword>
<keyword id="KW-0660">Purine salvage</keyword>
<keyword id="KW-0808">Transferase</keyword>
<dbReference type="EC" id="2.4.2.7" evidence="1"/>
<dbReference type="EMBL" id="CP000431">
    <property type="protein sequence ID" value="ABG98665.1"/>
    <property type="molecule type" value="Genomic_DNA"/>
</dbReference>
<dbReference type="RefSeq" id="WP_011598641.1">
    <property type="nucleotide sequence ID" value="NC_008268.1"/>
</dbReference>
<dbReference type="SMR" id="Q0S1C1"/>
<dbReference type="KEGG" id="rha:RHA1_ro06899"/>
<dbReference type="PATRIC" id="fig|101510.16.peg.6958"/>
<dbReference type="eggNOG" id="COG0503">
    <property type="taxonomic scope" value="Bacteria"/>
</dbReference>
<dbReference type="HOGENOM" id="CLU_063339_3_3_11"/>
<dbReference type="OrthoDB" id="9803963at2"/>
<dbReference type="UniPathway" id="UPA00588">
    <property type="reaction ID" value="UER00646"/>
</dbReference>
<dbReference type="Proteomes" id="UP000008710">
    <property type="component" value="Chromosome"/>
</dbReference>
<dbReference type="GO" id="GO:0005737">
    <property type="term" value="C:cytoplasm"/>
    <property type="evidence" value="ECO:0007669"/>
    <property type="project" value="UniProtKB-SubCell"/>
</dbReference>
<dbReference type="GO" id="GO:0002055">
    <property type="term" value="F:adenine binding"/>
    <property type="evidence" value="ECO:0007669"/>
    <property type="project" value="TreeGrafter"/>
</dbReference>
<dbReference type="GO" id="GO:0003999">
    <property type="term" value="F:adenine phosphoribosyltransferase activity"/>
    <property type="evidence" value="ECO:0007669"/>
    <property type="project" value="UniProtKB-UniRule"/>
</dbReference>
<dbReference type="GO" id="GO:0016208">
    <property type="term" value="F:AMP binding"/>
    <property type="evidence" value="ECO:0007669"/>
    <property type="project" value="TreeGrafter"/>
</dbReference>
<dbReference type="GO" id="GO:0006168">
    <property type="term" value="P:adenine salvage"/>
    <property type="evidence" value="ECO:0007669"/>
    <property type="project" value="InterPro"/>
</dbReference>
<dbReference type="GO" id="GO:0044209">
    <property type="term" value="P:AMP salvage"/>
    <property type="evidence" value="ECO:0007669"/>
    <property type="project" value="UniProtKB-UniRule"/>
</dbReference>
<dbReference type="GO" id="GO:0006166">
    <property type="term" value="P:purine ribonucleoside salvage"/>
    <property type="evidence" value="ECO:0007669"/>
    <property type="project" value="UniProtKB-KW"/>
</dbReference>
<dbReference type="CDD" id="cd06223">
    <property type="entry name" value="PRTases_typeI"/>
    <property type="match status" value="1"/>
</dbReference>
<dbReference type="FunFam" id="3.40.50.2020:FF:000021">
    <property type="entry name" value="Adenine phosphoribosyltransferase"/>
    <property type="match status" value="1"/>
</dbReference>
<dbReference type="Gene3D" id="3.40.50.2020">
    <property type="match status" value="1"/>
</dbReference>
<dbReference type="HAMAP" id="MF_00004">
    <property type="entry name" value="Aden_phosphoribosyltr"/>
    <property type="match status" value="1"/>
</dbReference>
<dbReference type="InterPro" id="IPR005764">
    <property type="entry name" value="Ade_phspho_trans"/>
</dbReference>
<dbReference type="InterPro" id="IPR000836">
    <property type="entry name" value="PRibTrfase_dom"/>
</dbReference>
<dbReference type="InterPro" id="IPR029057">
    <property type="entry name" value="PRTase-like"/>
</dbReference>
<dbReference type="InterPro" id="IPR050054">
    <property type="entry name" value="UPRTase/APRTase"/>
</dbReference>
<dbReference type="NCBIfam" id="NF002636">
    <property type="entry name" value="PRK02304.1-5"/>
    <property type="match status" value="1"/>
</dbReference>
<dbReference type="PANTHER" id="PTHR32315">
    <property type="entry name" value="ADENINE PHOSPHORIBOSYLTRANSFERASE"/>
    <property type="match status" value="1"/>
</dbReference>
<dbReference type="PANTHER" id="PTHR32315:SF3">
    <property type="entry name" value="ADENINE PHOSPHORIBOSYLTRANSFERASE"/>
    <property type="match status" value="1"/>
</dbReference>
<dbReference type="Pfam" id="PF00156">
    <property type="entry name" value="Pribosyltran"/>
    <property type="match status" value="1"/>
</dbReference>
<dbReference type="SUPFAM" id="SSF53271">
    <property type="entry name" value="PRTase-like"/>
    <property type="match status" value="1"/>
</dbReference>
<dbReference type="PROSITE" id="PS00103">
    <property type="entry name" value="PUR_PYR_PR_TRANSFER"/>
    <property type="match status" value="1"/>
</dbReference>
<protein>
    <recommendedName>
        <fullName evidence="1">Adenine phosphoribosyltransferase</fullName>
        <shortName evidence="1">APRT</shortName>
        <ecNumber evidence="1">2.4.2.7</ecNumber>
    </recommendedName>
</protein>
<comment type="function">
    <text evidence="1">Catalyzes a salvage reaction resulting in the formation of AMP, that is energically less costly than de novo synthesis.</text>
</comment>
<comment type="catalytic activity">
    <reaction evidence="1">
        <text>AMP + diphosphate = 5-phospho-alpha-D-ribose 1-diphosphate + adenine</text>
        <dbReference type="Rhea" id="RHEA:16609"/>
        <dbReference type="ChEBI" id="CHEBI:16708"/>
        <dbReference type="ChEBI" id="CHEBI:33019"/>
        <dbReference type="ChEBI" id="CHEBI:58017"/>
        <dbReference type="ChEBI" id="CHEBI:456215"/>
        <dbReference type="EC" id="2.4.2.7"/>
    </reaction>
</comment>
<comment type="pathway">
    <text evidence="1">Purine metabolism; AMP biosynthesis via salvage pathway; AMP from adenine: step 1/1.</text>
</comment>
<comment type="subunit">
    <text evidence="1">Homodimer.</text>
</comment>
<comment type="subcellular location">
    <subcellularLocation>
        <location evidence="1">Cytoplasm</location>
    </subcellularLocation>
</comment>
<comment type="similarity">
    <text evidence="1">Belongs to the purine/pyrimidine phosphoribosyltransferase family.</text>
</comment>
<name>APT_RHOJR</name>
<feature type="chain" id="PRO_1000000335" description="Adenine phosphoribosyltransferase">
    <location>
        <begin position="1"/>
        <end position="177"/>
    </location>
</feature>